<evidence type="ECO:0000250" key="1"/>
<evidence type="ECO:0000250" key="2">
    <source>
        <dbReference type="UniProtKB" id="P00157"/>
    </source>
</evidence>
<evidence type="ECO:0000255" key="3">
    <source>
        <dbReference type="PROSITE-ProRule" id="PRU00967"/>
    </source>
</evidence>
<evidence type="ECO:0000255" key="4">
    <source>
        <dbReference type="PROSITE-ProRule" id="PRU00968"/>
    </source>
</evidence>
<reference key="1">
    <citation type="journal article" date="1999" name="J. Mammal.">
        <title>Systematics of the genera Carollia and Rhinophylla based on the cytochrome b gene.</title>
        <authorList>
            <person name="Wright A.J."/>
            <person name="Van Den Bussche R.A."/>
            <person name="Lim B.K."/>
            <person name="Engstrom M.D."/>
            <person name="Baker R.J."/>
        </authorList>
    </citation>
    <scope>NUCLEOTIDE SEQUENCE [GENOMIC DNA]</scope>
    <source>
        <strain>Isolate F40073</strain>
        <strain>Isolate F40093</strain>
    </source>
</reference>
<feature type="chain" id="PRO_0000061495" description="Cytochrome b">
    <location>
        <begin position="1"/>
        <end position="379"/>
    </location>
</feature>
<feature type="transmembrane region" description="Helical" evidence="2">
    <location>
        <begin position="33"/>
        <end position="53"/>
    </location>
</feature>
<feature type="transmembrane region" description="Helical" evidence="2">
    <location>
        <begin position="77"/>
        <end position="98"/>
    </location>
</feature>
<feature type="transmembrane region" description="Helical" evidence="2">
    <location>
        <begin position="113"/>
        <end position="133"/>
    </location>
</feature>
<feature type="transmembrane region" description="Helical" evidence="2">
    <location>
        <begin position="178"/>
        <end position="198"/>
    </location>
</feature>
<feature type="transmembrane region" description="Helical" evidence="2">
    <location>
        <begin position="226"/>
        <end position="246"/>
    </location>
</feature>
<feature type="transmembrane region" description="Helical" evidence="2">
    <location>
        <begin position="288"/>
        <end position="308"/>
    </location>
</feature>
<feature type="transmembrane region" description="Helical" evidence="2">
    <location>
        <begin position="320"/>
        <end position="340"/>
    </location>
</feature>
<feature type="transmembrane region" description="Helical" evidence="2">
    <location>
        <begin position="347"/>
        <end position="367"/>
    </location>
</feature>
<feature type="binding site" description="axial binding residue" evidence="2">
    <location>
        <position position="83"/>
    </location>
    <ligand>
        <name>heme b</name>
        <dbReference type="ChEBI" id="CHEBI:60344"/>
        <label>b562</label>
    </ligand>
    <ligandPart>
        <name>Fe</name>
        <dbReference type="ChEBI" id="CHEBI:18248"/>
    </ligandPart>
</feature>
<feature type="binding site" description="axial binding residue" evidence="2">
    <location>
        <position position="97"/>
    </location>
    <ligand>
        <name>heme b</name>
        <dbReference type="ChEBI" id="CHEBI:60344"/>
        <label>b566</label>
    </ligand>
    <ligandPart>
        <name>Fe</name>
        <dbReference type="ChEBI" id="CHEBI:18248"/>
    </ligandPart>
</feature>
<feature type="binding site" description="axial binding residue" evidence="2">
    <location>
        <position position="182"/>
    </location>
    <ligand>
        <name>heme b</name>
        <dbReference type="ChEBI" id="CHEBI:60344"/>
        <label>b562</label>
    </ligand>
    <ligandPart>
        <name>Fe</name>
        <dbReference type="ChEBI" id="CHEBI:18248"/>
    </ligandPart>
</feature>
<feature type="binding site" description="axial binding residue" evidence="2">
    <location>
        <position position="196"/>
    </location>
    <ligand>
        <name>heme b</name>
        <dbReference type="ChEBI" id="CHEBI:60344"/>
        <label>b566</label>
    </ligand>
    <ligandPart>
        <name>Fe</name>
        <dbReference type="ChEBI" id="CHEBI:18248"/>
    </ligandPart>
</feature>
<feature type="binding site" evidence="2">
    <location>
        <position position="201"/>
    </location>
    <ligand>
        <name>a ubiquinone</name>
        <dbReference type="ChEBI" id="CHEBI:16389"/>
    </ligand>
</feature>
<gene>
    <name type="primary">MT-CYB</name>
    <name type="synonym">COB</name>
    <name type="synonym">CYTB</name>
    <name type="synonym">MTCYB</name>
</gene>
<name>CYB_RHIAL</name>
<geneLocation type="mitochondrion"/>
<protein>
    <recommendedName>
        <fullName>Cytochrome b</fullName>
    </recommendedName>
    <alternativeName>
        <fullName>Complex III subunit 3</fullName>
    </alternativeName>
    <alternativeName>
        <fullName>Complex III subunit III</fullName>
    </alternativeName>
    <alternativeName>
        <fullName>Cytochrome b-c1 complex subunit 3</fullName>
    </alternativeName>
    <alternativeName>
        <fullName>Ubiquinol-cytochrome-c reductase complex cytochrome b subunit</fullName>
    </alternativeName>
</protein>
<accession>Q9G1F7</accession>
<dbReference type="EMBL" id="AF187027">
    <property type="protein sequence ID" value="AAG25908.1"/>
    <property type="molecule type" value="Genomic_DNA"/>
</dbReference>
<dbReference type="EMBL" id="AF187028">
    <property type="protein sequence ID" value="AAG25909.1"/>
    <property type="molecule type" value="Genomic_DNA"/>
</dbReference>
<dbReference type="SMR" id="Q9G1F7"/>
<dbReference type="GO" id="GO:0005743">
    <property type="term" value="C:mitochondrial inner membrane"/>
    <property type="evidence" value="ECO:0007669"/>
    <property type="project" value="UniProtKB-SubCell"/>
</dbReference>
<dbReference type="GO" id="GO:0045275">
    <property type="term" value="C:respiratory chain complex III"/>
    <property type="evidence" value="ECO:0007669"/>
    <property type="project" value="InterPro"/>
</dbReference>
<dbReference type="GO" id="GO:0046872">
    <property type="term" value="F:metal ion binding"/>
    <property type="evidence" value="ECO:0007669"/>
    <property type="project" value="UniProtKB-KW"/>
</dbReference>
<dbReference type="GO" id="GO:0008121">
    <property type="term" value="F:ubiquinol-cytochrome-c reductase activity"/>
    <property type="evidence" value="ECO:0007669"/>
    <property type="project" value="InterPro"/>
</dbReference>
<dbReference type="GO" id="GO:0006122">
    <property type="term" value="P:mitochondrial electron transport, ubiquinol to cytochrome c"/>
    <property type="evidence" value="ECO:0007669"/>
    <property type="project" value="TreeGrafter"/>
</dbReference>
<dbReference type="CDD" id="cd00290">
    <property type="entry name" value="cytochrome_b_C"/>
    <property type="match status" value="1"/>
</dbReference>
<dbReference type="CDD" id="cd00284">
    <property type="entry name" value="Cytochrome_b_N"/>
    <property type="match status" value="1"/>
</dbReference>
<dbReference type="FunFam" id="1.20.810.10:FF:000002">
    <property type="entry name" value="Cytochrome b"/>
    <property type="match status" value="1"/>
</dbReference>
<dbReference type="Gene3D" id="1.20.810.10">
    <property type="entry name" value="Cytochrome Bc1 Complex, Chain C"/>
    <property type="match status" value="1"/>
</dbReference>
<dbReference type="InterPro" id="IPR005798">
    <property type="entry name" value="Cyt_b/b6_C"/>
</dbReference>
<dbReference type="InterPro" id="IPR036150">
    <property type="entry name" value="Cyt_b/b6_C_sf"/>
</dbReference>
<dbReference type="InterPro" id="IPR005797">
    <property type="entry name" value="Cyt_b/b6_N"/>
</dbReference>
<dbReference type="InterPro" id="IPR027387">
    <property type="entry name" value="Cytb/b6-like_sf"/>
</dbReference>
<dbReference type="InterPro" id="IPR030689">
    <property type="entry name" value="Cytochrome_b"/>
</dbReference>
<dbReference type="InterPro" id="IPR048260">
    <property type="entry name" value="Cytochrome_b_C_euk/bac"/>
</dbReference>
<dbReference type="InterPro" id="IPR048259">
    <property type="entry name" value="Cytochrome_b_N_euk/bac"/>
</dbReference>
<dbReference type="InterPro" id="IPR016174">
    <property type="entry name" value="Di-haem_cyt_TM"/>
</dbReference>
<dbReference type="PANTHER" id="PTHR19271">
    <property type="entry name" value="CYTOCHROME B"/>
    <property type="match status" value="1"/>
</dbReference>
<dbReference type="PANTHER" id="PTHR19271:SF16">
    <property type="entry name" value="CYTOCHROME B"/>
    <property type="match status" value="1"/>
</dbReference>
<dbReference type="Pfam" id="PF00032">
    <property type="entry name" value="Cytochrom_B_C"/>
    <property type="match status" value="1"/>
</dbReference>
<dbReference type="Pfam" id="PF00033">
    <property type="entry name" value="Cytochrome_B"/>
    <property type="match status" value="1"/>
</dbReference>
<dbReference type="PIRSF" id="PIRSF038885">
    <property type="entry name" value="COB"/>
    <property type="match status" value="1"/>
</dbReference>
<dbReference type="SUPFAM" id="SSF81648">
    <property type="entry name" value="a domain/subunit of cytochrome bc1 complex (Ubiquinol-cytochrome c reductase)"/>
    <property type="match status" value="1"/>
</dbReference>
<dbReference type="SUPFAM" id="SSF81342">
    <property type="entry name" value="Transmembrane di-heme cytochromes"/>
    <property type="match status" value="1"/>
</dbReference>
<dbReference type="PROSITE" id="PS51003">
    <property type="entry name" value="CYTB_CTER"/>
    <property type="match status" value="1"/>
</dbReference>
<dbReference type="PROSITE" id="PS51002">
    <property type="entry name" value="CYTB_NTER"/>
    <property type="match status" value="1"/>
</dbReference>
<sequence>MTNIRKTHPLVKIINNSLVDLPAPSSLSAWWNFGSLLGVCLAVQILTGLFLAMHYTSDTATAFNSVTHICRDVNYGWLIRYLHANGASMFFICLYLHVGRGMYYGSYTYSETWNVGIILLFAVMATAFMGYVLPWGQMSFWGATVITNLLSAIPYIGTDLVQWIWGGFSVDKATLTRFFAFHFLLPFIVTALVMVHLLFLHETGSNNPTGIPSDSDMIPFHPYYTIKDMLGFLIMLAALSTLVLFSPDLLGDPDNYIPANPLNTPPHIKPEWYFLFAYAILRSIPNKLGGVLALVLSILILAIIPLLHTSKQRSMMFRPLSQCLFWLLVAVLFTLTWIGGQPVEYPFIIIGQTASVLYFLIILVFMPLTSLIENHLMKW</sequence>
<proteinExistence type="inferred from homology"/>
<keyword id="KW-0249">Electron transport</keyword>
<keyword id="KW-0349">Heme</keyword>
<keyword id="KW-0408">Iron</keyword>
<keyword id="KW-0472">Membrane</keyword>
<keyword id="KW-0479">Metal-binding</keyword>
<keyword id="KW-0496">Mitochondrion</keyword>
<keyword id="KW-0999">Mitochondrion inner membrane</keyword>
<keyword id="KW-0679">Respiratory chain</keyword>
<keyword id="KW-0812">Transmembrane</keyword>
<keyword id="KW-1133">Transmembrane helix</keyword>
<keyword id="KW-0813">Transport</keyword>
<keyword id="KW-0830">Ubiquinone</keyword>
<organism>
    <name type="scientific">Rhinophylla alethina</name>
    <name type="common">Hairy little fruit bat</name>
    <dbReference type="NCBI Taxonomy" id="138699"/>
    <lineage>
        <taxon>Eukaryota</taxon>
        <taxon>Metazoa</taxon>
        <taxon>Chordata</taxon>
        <taxon>Craniata</taxon>
        <taxon>Vertebrata</taxon>
        <taxon>Euteleostomi</taxon>
        <taxon>Mammalia</taxon>
        <taxon>Eutheria</taxon>
        <taxon>Laurasiatheria</taxon>
        <taxon>Chiroptera</taxon>
        <taxon>Yangochiroptera</taxon>
        <taxon>Phyllostomidae</taxon>
        <taxon>Carolliinae</taxon>
        <taxon>Rhinophylla</taxon>
    </lineage>
</organism>
<comment type="function">
    <text evidence="2">Component of the ubiquinol-cytochrome c reductase complex (complex III or cytochrome b-c1 complex) that is part of the mitochondrial respiratory chain. The b-c1 complex mediates electron transfer from ubiquinol to cytochrome c. Contributes to the generation of a proton gradient across the mitochondrial membrane that is then used for ATP synthesis.</text>
</comment>
<comment type="cofactor">
    <cofactor evidence="2">
        <name>heme b</name>
        <dbReference type="ChEBI" id="CHEBI:60344"/>
    </cofactor>
    <text evidence="2">Binds 2 heme b groups non-covalently.</text>
</comment>
<comment type="subunit">
    <text evidence="2">The cytochrome bc1 complex contains 11 subunits: 3 respiratory subunits (MT-CYB, CYC1 and UQCRFS1), 2 core proteins (UQCRC1 and UQCRC2) and 6 low-molecular weight proteins (UQCRH/QCR6, UQCRB/QCR7, UQCRQ/QCR8, UQCR10/QCR9, UQCR11/QCR10 and a cleavage product of UQCRFS1). This cytochrome bc1 complex then forms a dimer.</text>
</comment>
<comment type="subcellular location">
    <subcellularLocation>
        <location evidence="2">Mitochondrion inner membrane</location>
        <topology evidence="2">Multi-pass membrane protein</topology>
    </subcellularLocation>
</comment>
<comment type="miscellaneous">
    <text evidence="1">Heme 1 (or BL or b562) is low-potential and absorbs at about 562 nm, and heme 2 (or BH or b566) is high-potential and absorbs at about 566 nm.</text>
</comment>
<comment type="similarity">
    <text evidence="3 4">Belongs to the cytochrome b family.</text>
</comment>
<comment type="caution">
    <text evidence="2">The full-length protein contains only eight transmembrane helices, not nine as predicted by bioinformatics tools.</text>
</comment>